<gene>
    <name type="primary">mamB</name>
    <name type="ordered locus">amb0974</name>
    <name type="ordered locus">amb1007</name>
</gene>
<protein>
    <recommendedName>
        <fullName evidence="6">Magnetosome protein MamB</fullName>
    </recommendedName>
    <alternativeName>
        <fullName evidence="6">Probable iron transporter MamB</fullName>
    </alternativeName>
</protein>
<organism>
    <name type="scientific">Paramagnetospirillum magneticum (strain ATCC 700264 / AMB-1)</name>
    <name type="common">Magnetospirillum magneticum</name>
    <dbReference type="NCBI Taxonomy" id="342108"/>
    <lineage>
        <taxon>Bacteria</taxon>
        <taxon>Pseudomonadati</taxon>
        <taxon>Pseudomonadota</taxon>
        <taxon>Alphaproteobacteria</taxon>
        <taxon>Rhodospirillales</taxon>
        <taxon>Magnetospirillaceae</taxon>
        <taxon>Paramagnetospirillum</taxon>
    </lineage>
</organism>
<comment type="function">
    <text evidence="1 4 7">Plays a dual, essential role in magnetosome formation; required for magnetosome vesicle formation as well as biomineralization (Probable) (PubMed:20212111). Probably binds and transports iron (By similarity). Requires heterodimerization with MamM for stability (By similarity).</text>
</comment>
<comment type="subunit">
    <text evidence="1">Forms heterodimers with MamM (By similarity). Probably interacts with MamE (By similarity).</text>
</comment>
<comment type="subcellular location">
    <subcellularLocation>
        <location evidence="1">Magnetosome membrane</location>
        <topology evidence="3">Multi-pass membrane protein</topology>
    </subcellularLocation>
</comment>
<comment type="induction">
    <text evidence="7">Locus amb0974 is part of the probable 18 gene mamAB operon.</text>
</comment>
<comment type="domain">
    <text evidence="1 2">The C-terminal domain (CTD) is probably responsible for hetero- and homodimerization (By similarity). The CTD assumes a V-shaped, dimeric metallo-chaperone-like fold and binds 1 Fe cation per subunit (By similarity).</text>
</comment>
<comment type="disruption phenotype">
    <text evidence="4">When both copies of this protein are deleted cells have no magnetic response and no magnetosome membranes. Deletion of just amb0974 leads to an intermediate magnetic response and still makes magnetosome membranes (PubMed:20212111). Deletion of genes mamH to mamV (amb0961 to amb0978) gives cells with no magnetosomes and no magnetic response (PubMed:20212111).</text>
</comment>
<comment type="miscellaneous">
    <text evidence="6">This bacteria makes up to 20 cubo-octahedral magnetosomes of about 45 nm in diameter which contain membrane-bound crystals of magnetite (Fe(3)O(4)).</text>
</comment>
<comment type="miscellaneous">
    <text evidence="5">Expression of just the minimal mamAB gene cluster (amb0961 to amb0978), including this gene, is sufficient to form a minimal magnetosome chain with small magnetite particles.</text>
</comment>
<comment type="similarity">
    <text evidence="6">Belongs to the cation diffusion facilitator (CDF) transporter (TC 2.A.4) family.</text>
</comment>
<proteinExistence type="inferred from homology"/>
<feature type="chain" id="PRO_0000447737" description="Magnetosome protein MamB">
    <location>
        <begin position="1"/>
        <end position="296"/>
    </location>
</feature>
<feature type="topological domain" description="Cytoplasmic" evidence="6">
    <location>
        <begin position="1"/>
        <end position="12"/>
    </location>
</feature>
<feature type="transmembrane region" description="Helical" evidence="3">
    <location>
        <begin position="13"/>
        <end position="33"/>
    </location>
</feature>
<feature type="topological domain" description="Lumenal" evidence="6">
    <location>
        <begin position="34"/>
        <end position="83"/>
    </location>
</feature>
<feature type="transmembrane region" description="Helical" evidence="3">
    <location>
        <begin position="84"/>
        <end position="104"/>
    </location>
</feature>
<feature type="topological domain" description="Cytoplasmic" evidence="6">
    <location>
        <begin position="105"/>
        <end position="112"/>
    </location>
</feature>
<feature type="transmembrane region" description="Helical" evidence="3">
    <location>
        <begin position="113"/>
        <end position="133"/>
    </location>
</feature>
<feature type="topological domain" description="Lumenal" evidence="6">
    <location>
        <begin position="134"/>
        <end position="164"/>
    </location>
</feature>
<feature type="transmembrane region" description="Helical" evidence="3">
    <location>
        <begin position="165"/>
        <end position="185"/>
    </location>
</feature>
<feature type="topological domain" description="Cytoplasmic" evidence="6">
    <location>
        <begin position="186"/>
        <end position="296"/>
    </location>
</feature>
<feature type="region of interest" description="Transmembrane domain (TMD)" evidence="6">
    <location>
        <begin position="1"/>
        <end position="214"/>
    </location>
</feature>
<feature type="region of interest" description="C-terminal domain (CTD)" evidence="6">
    <location>
        <begin position="215"/>
        <end position="296"/>
    </location>
</feature>
<accession>Q2W8L4</accession>
<sequence length="296" mass="31875">MKFENCRDCREEVVWWAFTADICMTLFKGVLGLMSGSVALVADSLHSGADVVASGVTQLSLKISNKPADERYPFGYGNIQYISSSIVGSLLLIGASFLMYGSVMKLISGTYEAPSIFAAVGASVTVIVNELMYRYQICVGNENNSPAIIANAWDNRSDAISSAAVMVGVIASVIGFPIADTIAAIGVSALVGRIGLELIGTSIHGLMDSSVDTELLQTAWQVAMDTPMVHSIYFLRGRHVGEDVQFDIRLRVDPNLRIKDSSMVAEAVRRRIQEEIPHARDIRLFVSPAPAAAARA</sequence>
<dbReference type="EMBL" id="AP007255">
    <property type="protein sequence ID" value="BAE49778.1"/>
    <property type="molecule type" value="Genomic_DNA"/>
</dbReference>
<dbReference type="EMBL" id="AP007255">
    <property type="protein sequence ID" value="BAE49811.1"/>
    <property type="molecule type" value="Genomic_DNA"/>
</dbReference>
<dbReference type="RefSeq" id="WP_008622631.1">
    <property type="nucleotide sequence ID" value="NC_007626.1"/>
</dbReference>
<dbReference type="SMR" id="Q2W8L4"/>
<dbReference type="STRING" id="342108.amb0974"/>
<dbReference type="KEGG" id="mag:amb0974"/>
<dbReference type="KEGG" id="mag:amb1007"/>
<dbReference type="HOGENOM" id="CLU_013430_3_3_5"/>
<dbReference type="OrthoDB" id="9806522at2"/>
<dbReference type="Proteomes" id="UP000007058">
    <property type="component" value="Chromosome"/>
</dbReference>
<dbReference type="GO" id="GO:0110146">
    <property type="term" value="C:magnetosome membrane"/>
    <property type="evidence" value="ECO:0000250"/>
    <property type="project" value="UniProtKB"/>
</dbReference>
<dbReference type="GO" id="GO:0046872">
    <property type="term" value="F:metal ion binding"/>
    <property type="evidence" value="ECO:0007669"/>
    <property type="project" value="UniProtKB-KW"/>
</dbReference>
<dbReference type="GO" id="GO:0008324">
    <property type="term" value="F:monoatomic cation transmembrane transporter activity"/>
    <property type="evidence" value="ECO:0007669"/>
    <property type="project" value="InterPro"/>
</dbReference>
<dbReference type="GO" id="GO:0006826">
    <property type="term" value="P:iron ion transport"/>
    <property type="evidence" value="ECO:0007669"/>
    <property type="project" value="UniProtKB-KW"/>
</dbReference>
<dbReference type="FunFam" id="3.30.70.1350:FF:000016">
    <property type="entry name" value="Co/Zn/Cd cation transporter"/>
    <property type="match status" value="1"/>
</dbReference>
<dbReference type="FunFam" id="1.20.1510.10:FF:000006">
    <property type="entry name" value="Divalent cation efflux transporter"/>
    <property type="match status" value="1"/>
</dbReference>
<dbReference type="Gene3D" id="1.20.1510.10">
    <property type="entry name" value="Cation efflux protein transmembrane domain"/>
    <property type="match status" value="1"/>
</dbReference>
<dbReference type="Gene3D" id="3.30.70.1350">
    <property type="entry name" value="Cation efflux protein, cytoplasmic domain"/>
    <property type="match status" value="1"/>
</dbReference>
<dbReference type="InterPro" id="IPR002524">
    <property type="entry name" value="Cation_efflux"/>
</dbReference>
<dbReference type="InterPro" id="IPR027470">
    <property type="entry name" value="Cation_efflux_CTD"/>
</dbReference>
<dbReference type="InterPro" id="IPR036837">
    <property type="entry name" value="Cation_efflux_CTD_sf"/>
</dbReference>
<dbReference type="InterPro" id="IPR027469">
    <property type="entry name" value="Cation_efflux_TMD_sf"/>
</dbReference>
<dbReference type="InterPro" id="IPR050291">
    <property type="entry name" value="CDF_Transporter"/>
</dbReference>
<dbReference type="InterPro" id="IPR053436">
    <property type="entry name" value="Magnetosome_CDF_Transporter"/>
</dbReference>
<dbReference type="NCBIfam" id="TIGR01297">
    <property type="entry name" value="CDF"/>
    <property type="match status" value="1"/>
</dbReference>
<dbReference type="NCBIfam" id="NF033616">
    <property type="entry name" value="CDF_MamB"/>
    <property type="match status" value="1"/>
</dbReference>
<dbReference type="PANTHER" id="PTHR43840">
    <property type="entry name" value="MITOCHONDRIAL METAL TRANSPORTER 1-RELATED"/>
    <property type="match status" value="1"/>
</dbReference>
<dbReference type="PANTHER" id="PTHR43840:SF15">
    <property type="entry name" value="MITOCHONDRIAL METAL TRANSPORTER 1-RELATED"/>
    <property type="match status" value="1"/>
</dbReference>
<dbReference type="Pfam" id="PF01545">
    <property type="entry name" value="Cation_efflux"/>
    <property type="match status" value="1"/>
</dbReference>
<dbReference type="Pfam" id="PF16916">
    <property type="entry name" value="ZT_dimer"/>
    <property type="match status" value="1"/>
</dbReference>
<dbReference type="SUPFAM" id="SSF160240">
    <property type="entry name" value="Cation efflux protein cytoplasmic domain-like"/>
    <property type="match status" value="1"/>
</dbReference>
<dbReference type="SUPFAM" id="SSF161111">
    <property type="entry name" value="Cation efflux protein transmembrane domain-like"/>
    <property type="match status" value="1"/>
</dbReference>
<evidence type="ECO:0000250" key="1">
    <source>
        <dbReference type="UniProtKB" id="V6F510"/>
    </source>
</evidence>
<evidence type="ECO:0000250" key="2">
    <source>
        <dbReference type="UniProtKB" id="W6KHH6"/>
    </source>
</evidence>
<evidence type="ECO:0000255" key="3"/>
<evidence type="ECO:0000269" key="4">
    <source>
    </source>
</evidence>
<evidence type="ECO:0000269" key="5">
    <source>
    </source>
</evidence>
<evidence type="ECO:0000305" key="6"/>
<evidence type="ECO:0000305" key="7">
    <source>
    </source>
</evidence>
<keyword id="KW-0091">Biomineralization</keyword>
<keyword id="KW-0406">Ion transport</keyword>
<keyword id="KW-0408">Iron</keyword>
<keyword id="KW-0410">Iron transport</keyword>
<keyword id="KW-1281">Magnetosome</keyword>
<keyword id="KW-0472">Membrane</keyword>
<keyword id="KW-0479">Metal-binding</keyword>
<keyword id="KW-0812">Transmembrane</keyword>
<keyword id="KW-1133">Transmembrane helix</keyword>
<keyword id="KW-0813">Transport</keyword>
<name>MAMB_PARM1</name>
<reference key="1">
    <citation type="journal article" date="2005" name="DNA Res.">
        <title>Complete genome sequence of the facultative anaerobic magnetotactic bacterium Magnetospirillum sp. strain AMB-1.</title>
        <authorList>
            <person name="Matsunaga T."/>
            <person name="Okamura Y."/>
            <person name="Fukuda Y."/>
            <person name="Wahyudi A.T."/>
            <person name="Murase Y."/>
            <person name="Takeyama H."/>
        </authorList>
    </citation>
    <scope>NUCLEOTIDE SEQUENCE [LARGE SCALE GENOMIC DNA]</scope>
    <source>
        <strain>ATCC 700264 / AMB-1</strain>
    </source>
</reference>
<reference key="2">
    <citation type="journal article" date="2010" name="Proc. Natl. Acad. Sci. U.S.A.">
        <title>Comprehensive genetic dissection of the magnetosome gene island reveals the step-wise assembly of a prokaryotic organelle.</title>
        <authorList>
            <person name="Murat D."/>
            <person name="Quinlan A."/>
            <person name="Vali H."/>
            <person name="Komeili A."/>
        </authorList>
    </citation>
    <scope>FUNCTION</scope>
    <scope>PROBABLE OPERON</scope>
    <scope>DISRUPTION PHENOTYPE</scope>
    <source>
        <strain>ATCC 700264 / AMB-1</strain>
    </source>
</reference>
<reference key="3">
    <citation type="journal article" date="2012" name="Mol. Microbiol.">
        <title>The magnetosome membrane protein, MmsF, is a major regulator of magnetite biomineralization in Magnetospirillum magneticum AMB-1.</title>
        <authorList>
            <person name="Murat D."/>
            <person name="Falahati V."/>
            <person name="Bertinetti L."/>
            <person name="Csencsits R."/>
            <person name="Koernig A."/>
            <person name="Downing K."/>
            <person name="Faivre D."/>
            <person name="Komeili A."/>
        </authorList>
    </citation>
    <scope>MINIMAL MAGNETOSOME ISLAND</scope>
    <source>
        <strain>ATCC 700264 / AMB-1</strain>
    </source>
</reference>